<name>RS11_NITEC</name>
<evidence type="ECO:0000255" key="1">
    <source>
        <dbReference type="HAMAP-Rule" id="MF_01310"/>
    </source>
</evidence>
<evidence type="ECO:0000305" key="2"/>
<reference key="1">
    <citation type="journal article" date="2007" name="Environ. Microbiol.">
        <title>Whole-genome analysis of the ammonia-oxidizing bacterium, Nitrosomonas eutropha C91: implications for niche adaptation.</title>
        <authorList>
            <person name="Stein L.Y."/>
            <person name="Arp D.J."/>
            <person name="Berube P.M."/>
            <person name="Chain P.S."/>
            <person name="Hauser L."/>
            <person name="Jetten M.S."/>
            <person name="Klotz M.G."/>
            <person name="Larimer F.W."/>
            <person name="Norton J.M."/>
            <person name="Op den Camp H.J.M."/>
            <person name="Shin M."/>
            <person name="Wei X."/>
        </authorList>
    </citation>
    <scope>NUCLEOTIDE SEQUENCE [LARGE SCALE GENOMIC DNA]</scope>
    <source>
        <strain>DSM 101675 / C91 / Nm57</strain>
    </source>
</reference>
<keyword id="KW-0687">Ribonucleoprotein</keyword>
<keyword id="KW-0689">Ribosomal protein</keyword>
<keyword id="KW-0694">RNA-binding</keyword>
<keyword id="KW-0699">rRNA-binding</keyword>
<feature type="chain" id="PRO_0000294811" description="Small ribosomal subunit protein uS11">
    <location>
        <begin position="1"/>
        <end position="129"/>
    </location>
</feature>
<organism>
    <name type="scientific">Nitrosomonas eutropha (strain DSM 101675 / C91 / Nm57)</name>
    <dbReference type="NCBI Taxonomy" id="335283"/>
    <lineage>
        <taxon>Bacteria</taxon>
        <taxon>Pseudomonadati</taxon>
        <taxon>Pseudomonadota</taxon>
        <taxon>Betaproteobacteria</taxon>
        <taxon>Nitrosomonadales</taxon>
        <taxon>Nitrosomonadaceae</taxon>
        <taxon>Nitrosomonas</taxon>
    </lineage>
</organism>
<dbReference type="EMBL" id="CP000450">
    <property type="protein sequence ID" value="ABI58853.1"/>
    <property type="molecule type" value="Genomic_DNA"/>
</dbReference>
<dbReference type="RefSeq" id="WP_011633694.1">
    <property type="nucleotide sequence ID" value="NC_008344.1"/>
</dbReference>
<dbReference type="SMR" id="Q0AIH3"/>
<dbReference type="STRING" id="335283.Neut_0581"/>
<dbReference type="KEGG" id="net:Neut_0581"/>
<dbReference type="eggNOG" id="COG0100">
    <property type="taxonomic scope" value="Bacteria"/>
</dbReference>
<dbReference type="HOGENOM" id="CLU_072439_5_0_4"/>
<dbReference type="OrthoDB" id="9806415at2"/>
<dbReference type="Proteomes" id="UP000001966">
    <property type="component" value="Chromosome"/>
</dbReference>
<dbReference type="GO" id="GO:1990904">
    <property type="term" value="C:ribonucleoprotein complex"/>
    <property type="evidence" value="ECO:0007669"/>
    <property type="project" value="UniProtKB-KW"/>
</dbReference>
<dbReference type="GO" id="GO:0005840">
    <property type="term" value="C:ribosome"/>
    <property type="evidence" value="ECO:0007669"/>
    <property type="project" value="UniProtKB-KW"/>
</dbReference>
<dbReference type="GO" id="GO:0019843">
    <property type="term" value="F:rRNA binding"/>
    <property type="evidence" value="ECO:0007669"/>
    <property type="project" value="UniProtKB-UniRule"/>
</dbReference>
<dbReference type="GO" id="GO:0003735">
    <property type="term" value="F:structural constituent of ribosome"/>
    <property type="evidence" value="ECO:0007669"/>
    <property type="project" value="InterPro"/>
</dbReference>
<dbReference type="GO" id="GO:0006412">
    <property type="term" value="P:translation"/>
    <property type="evidence" value="ECO:0007669"/>
    <property type="project" value="UniProtKB-UniRule"/>
</dbReference>
<dbReference type="FunFam" id="3.30.420.80:FF:000001">
    <property type="entry name" value="30S ribosomal protein S11"/>
    <property type="match status" value="1"/>
</dbReference>
<dbReference type="Gene3D" id="3.30.420.80">
    <property type="entry name" value="Ribosomal protein S11"/>
    <property type="match status" value="1"/>
</dbReference>
<dbReference type="HAMAP" id="MF_01310">
    <property type="entry name" value="Ribosomal_uS11"/>
    <property type="match status" value="1"/>
</dbReference>
<dbReference type="InterPro" id="IPR001971">
    <property type="entry name" value="Ribosomal_uS11"/>
</dbReference>
<dbReference type="InterPro" id="IPR019981">
    <property type="entry name" value="Ribosomal_uS11_bac-type"/>
</dbReference>
<dbReference type="InterPro" id="IPR018102">
    <property type="entry name" value="Ribosomal_uS11_CS"/>
</dbReference>
<dbReference type="InterPro" id="IPR036967">
    <property type="entry name" value="Ribosomal_uS11_sf"/>
</dbReference>
<dbReference type="NCBIfam" id="NF003698">
    <property type="entry name" value="PRK05309.1"/>
    <property type="match status" value="1"/>
</dbReference>
<dbReference type="NCBIfam" id="TIGR03632">
    <property type="entry name" value="uS11_bact"/>
    <property type="match status" value="1"/>
</dbReference>
<dbReference type="PANTHER" id="PTHR11759">
    <property type="entry name" value="40S RIBOSOMAL PROTEIN S14/30S RIBOSOMAL PROTEIN S11"/>
    <property type="match status" value="1"/>
</dbReference>
<dbReference type="Pfam" id="PF00411">
    <property type="entry name" value="Ribosomal_S11"/>
    <property type="match status" value="1"/>
</dbReference>
<dbReference type="PIRSF" id="PIRSF002131">
    <property type="entry name" value="Ribosomal_S11"/>
    <property type="match status" value="1"/>
</dbReference>
<dbReference type="SUPFAM" id="SSF53137">
    <property type="entry name" value="Translational machinery components"/>
    <property type="match status" value="1"/>
</dbReference>
<dbReference type="PROSITE" id="PS00054">
    <property type="entry name" value="RIBOSOMAL_S11"/>
    <property type="match status" value="1"/>
</dbReference>
<accession>Q0AIH3</accession>
<gene>
    <name evidence="1" type="primary">rpsK</name>
    <name type="ordered locus">Neut_0581</name>
</gene>
<protein>
    <recommendedName>
        <fullName evidence="1">Small ribosomal subunit protein uS11</fullName>
    </recommendedName>
    <alternativeName>
        <fullName evidence="2">30S ribosomal protein S11</fullName>
    </alternativeName>
</protein>
<proteinExistence type="inferred from homology"/>
<comment type="function">
    <text evidence="1">Located on the platform of the 30S subunit, it bridges several disparate RNA helices of the 16S rRNA. Forms part of the Shine-Dalgarno cleft in the 70S ribosome.</text>
</comment>
<comment type="subunit">
    <text evidence="1">Part of the 30S ribosomal subunit. Interacts with proteins S7 and S18. Binds to IF-3.</text>
</comment>
<comment type="similarity">
    <text evidence="1">Belongs to the universal ribosomal protein uS11 family.</text>
</comment>
<sequence>MIKPPLKSRKKIKKNIIEGVAHIHASFNNTIVTISDRQGNALSWATSGGVGFKGSRKSTPFAAQVAAEHAGRAALEYGVKNLEIRVKGPGPGRDSAVRALNATGFKITSITDVTPVPHNGCRPPKKRRI</sequence>